<dbReference type="EMBL" id="DP000086">
    <property type="protein sequence ID" value="ABG66054.1"/>
    <property type="molecule type" value="Genomic_DNA"/>
</dbReference>
<dbReference type="EMBL" id="AP008216">
    <property type="protein sequence ID" value="BAF26394.1"/>
    <property type="status" value="ALT_INIT"/>
    <property type="molecule type" value="Genomic_DNA"/>
</dbReference>
<dbReference type="EMBL" id="AP014966">
    <property type="protein sequence ID" value="BAT10611.1"/>
    <property type="molecule type" value="Genomic_DNA"/>
</dbReference>
<dbReference type="EMBL" id="CM000147">
    <property type="protein sequence ID" value="EEE50864.1"/>
    <property type="molecule type" value="Genomic_DNA"/>
</dbReference>
<dbReference type="EMBL" id="AK102858">
    <property type="status" value="NOT_ANNOTATED_CDS"/>
    <property type="molecule type" value="mRNA"/>
</dbReference>
<dbReference type="PDB" id="2ZOM">
    <property type="method" value="X-ray"/>
    <property type="resolution" value="3.02 A"/>
    <property type="chains" value="A/B/C=65-177"/>
</dbReference>
<dbReference type="PDBsum" id="2ZOM"/>
<dbReference type="SMR" id="Q109R6"/>
<dbReference type="FunCoup" id="Q109R6">
    <property type="interactions" value="1432"/>
</dbReference>
<dbReference type="STRING" id="39947.Q109R6"/>
<dbReference type="PaxDb" id="39947-Q109R6"/>
<dbReference type="EnsemblPlants" id="Os10t0378300-01">
    <property type="protein sequence ID" value="Os10t0378300-01"/>
    <property type="gene ID" value="Os10g0378300"/>
</dbReference>
<dbReference type="Gramene" id="Os10t0378300-01">
    <property type="protein sequence ID" value="Os10t0378300-01"/>
    <property type="gene ID" value="Os10g0378300"/>
</dbReference>
<dbReference type="KEGG" id="dosa:Os10g0378300"/>
<dbReference type="eggNOG" id="KOG3338">
    <property type="taxonomic scope" value="Eukaryota"/>
</dbReference>
<dbReference type="HOGENOM" id="CLU_098807_0_0_1"/>
<dbReference type="InParanoid" id="Q109R6"/>
<dbReference type="OMA" id="VYTTFPD"/>
<dbReference type="EvolutionaryTrace" id="Q109R6"/>
<dbReference type="Proteomes" id="UP000000763">
    <property type="component" value="Chromosome 10"/>
</dbReference>
<dbReference type="Proteomes" id="UP000007752">
    <property type="component" value="Chromosome 10"/>
</dbReference>
<dbReference type="Proteomes" id="UP000059680">
    <property type="component" value="Chromosome 10"/>
</dbReference>
<dbReference type="ExpressionAtlas" id="Q109R6">
    <property type="expression patterns" value="baseline and differential"/>
</dbReference>
<dbReference type="GO" id="GO:0009507">
    <property type="term" value="C:chloroplast"/>
    <property type="evidence" value="ECO:0007669"/>
    <property type="project" value="UniProtKB-SubCell"/>
</dbReference>
<dbReference type="GO" id="GO:0005507">
    <property type="term" value="F:copper ion binding"/>
    <property type="evidence" value="ECO:0000318"/>
    <property type="project" value="GO_Central"/>
</dbReference>
<dbReference type="GO" id="GO:0070207">
    <property type="term" value="P:protein homotrimerization"/>
    <property type="evidence" value="ECO:0000353"/>
    <property type="project" value="UniProtKB"/>
</dbReference>
<dbReference type="GO" id="GO:0010038">
    <property type="term" value="P:response to metal ion"/>
    <property type="evidence" value="ECO:0007669"/>
    <property type="project" value="InterPro"/>
</dbReference>
<dbReference type="FunFam" id="3.30.70.120:FF:000008">
    <property type="entry name" value="Protein CutA 1, chloroplastic"/>
    <property type="match status" value="1"/>
</dbReference>
<dbReference type="Gene3D" id="3.30.70.120">
    <property type="match status" value="1"/>
</dbReference>
<dbReference type="InterPro" id="IPR004323">
    <property type="entry name" value="Ion_tolerance_CutA"/>
</dbReference>
<dbReference type="InterPro" id="IPR011322">
    <property type="entry name" value="N-reg_PII-like_a/b"/>
</dbReference>
<dbReference type="InterPro" id="IPR015867">
    <property type="entry name" value="N-reg_PII/ATP_PRibTrfase_C"/>
</dbReference>
<dbReference type="PANTHER" id="PTHR23419">
    <property type="entry name" value="DIVALENT CATION TOLERANCE CUTA-RELATED"/>
    <property type="match status" value="1"/>
</dbReference>
<dbReference type="PANTHER" id="PTHR23419:SF11">
    <property type="entry name" value="PROTEIN CUTA 1, CHLOROPLASTIC"/>
    <property type="match status" value="1"/>
</dbReference>
<dbReference type="Pfam" id="PF03091">
    <property type="entry name" value="CutA1"/>
    <property type="match status" value="1"/>
</dbReference>
<dbReference type="SUPFAM" id="SSF54913">
    <property type="entry name" value="GlnB-like"/>
    <property type="match status" value="1"/>
</dbReference>
<evidence type="ECO:0000255" key="1"/>
<evidence type="ECO:0000305" key="2"/>
<evidence type="ECO:0007829" key="3">
    <source>
        <dbReference type="PDB" id="2ZOM"/>
    </source>
</evidence>
<organism>
    <name type="scientific">Oryza sativa subsp. japonica</name>
    <name type="common">Rice</name>
    <dbReference type="NCBI Taxonomy" id="39947"/>
    <lineage>
        <taxon>Eukaryota</taxon>
        <taxon>Viridiplantae</taxon>
        <taxon>Streptophyta</taxon>
        <taxon>Embryophyta</taxon>
        <taxon>Tracheophyta</taxon>
        <taxon>Spermatophyta</taxon>
        <taxon>Magnoliopsida</taxon>
        <taxon>Liliopsida</taxon>
        <taxon>Poales</taxon>
        <taxon>Poaceae</taxon>
        <taxon>BOP clade</taxon>
        <taxon>Oryzoideae</taxon>
        <taxon>Oryzeae</taxon>
        <taxon>Oryzinae</taxon>
        <taxon>Oryza</taxon>
        <taxon>Oryza sativa</taxon>
    </lineage>
</organism>
<feature type="transit peptide" description="Chloroplast" evidence="1">
    <location>
        <begin position="1"/>
        <end position="60"/>
    </location>
</feature>
<feature type="chain" id="PRO_0000387497" description="Protein CutA 1, chloroplastic">
    <location>
        <begin position="61"/>
        <end position="177"/>
    </location>
</feature>
<feature type="strand" evidence="3">
    <location>
        <begin position="74"/>
        <end position="83"/>
    </location>
</feature>
<feature type="helix" evidence="3">
    <location>
        <begin position="84"/>
        <end position="96"/>
    </location>
</feature>
<feature type="strand" evidence="3">
    <location>
        <begin position="101"/>
        <end position="115"/>
    </location>
</feature>
<feature type="strand" evidence="3">
    <location>
        <begin position="118"/>
        <end position="132"/>
    </location>
</feature>
<feature type="helix" evidence="3">
    <location>
        <begin position="133"/>
        <end position="135"/>
    </location>
</feature>
<feature type="helix" evidence="3">
    <location>
        <begin position="136"/>
        <end position="145"/>
    </location>
</feature>
<feature type="strand" evidence="3">
    <location>
        <begin position="148"/>
        <end position="151"/>
    </location>
</feature>
<feature type="strand" evidence="3">
    <location>
        <begin position="155"/>
        <end position="158"/>
    </location>
</feature>
<feature type="helix" evidence="3">
    <location>
        <begin position="164"/>
        <end position="173"/>
    </location>
</feature>
<comment type="subunit">
    <text>Homotrimer.</text>
</comment>
<comment type="subcellular location">
    <subcellularLocation>
        <location evidence="2">Plastid</location>
        <location evidence="2">Chloroplast</location>
    </subcellularLocation>
</comment>
<comment type="similarity">
    <text evidence="2">Belongs to the CutA family.</text>
</comment>
<comment type="sequence caution" evidence="2">
    <conflict type="erroneous initiation">
        <sequence resource="EMBL-CDS" id="BAF26394"/>
    </conflict>
</comment>
<gene>
    <name type="primary">CUTA1</name>
    <name type="ordered locus">Os10g0378300</name>
    <name type="ordered locus">LOC_Os10g23204</name>
    <name type="ORF">OsJ_31315</name>
</gene>
<keyword id="KW-0002">3D-structure</keyword>
<keyword id="KW-0150">Chloroplast</keyword>
<keyword id="KW-0934">Plastid</keyword>
<keyword id="KW-1185">Reference proteome</keyword>
<keyword id="KW-0809">Transit peptide</keyword>
<sequence>MPLLPSPLGSLSAAATAAPRRAAAAAGLSPLLLRRRAPIAGALLFLSLGAFAGVRSLSSSASARMESTSTTVPSIVVYVTVPNKEAGKRLAGSIISEKLAACVNIVPGIESVYWWEGKVQTDAEELLIIKTRESLLDALTEHVKANHEYDVPEVIALPIKGGNLKYLEWLKNSTRES</sequence>
<proteinExistence type="evidence at protein level"/>
<protein>
    <recommendedName>
        <fullName>Protein CutA 1, chloroplastic</fullName>
        <shortName>OsCutA1</shortName>
    </recommendedName>
</protein>
<name>CUTA1_ORYSJ</name>
<accession>Q109R6</accession>
<accession>A0A0P0XTW7</accession>
<accession>Q0IY21</accession>
<reference key="1">
    <citation type="journal article" date="2003" name="Science">
        <title>In-depth view of structure, activity, and evolution of rice chromosome 10.</title>
        <authorList>
            <person name="Yu Y."/>
            <person name="Rambo T."/>
            <person name="Currie J."/>
            <person name="Saski C."/>
            <person name="Kim H.-R."/>
            <person name="Collura K."/>
            <person name="Thompson S."/>
            <person name="Simmons J."/>
            <person name="Yang T.-J."/>
            <person name="Nah G."/>
            <person name="Patel A.J."/>
            <person name="Thurmond S."/>
            <person name="Henry D."/>
            <person name="Oates R."/>
            <person name="Palmer M."/>
            <person name="Pries G."/>
            <person name="Gibson J."/>
            <person name="Anderson H."/>
            <person name="Paradkar M."/>
            <person name="Crane L."/>
            <person name="Dale J."/>
            <person name="Carver M.B."/>
            <person name="Wood T."/>
            <person name="Frisch D."/>
            <person name="Engler F."/>
            <person name="Soderlund C."/>
            <person name="Palmer L.E."/>
            <person name="Teytelman L."/>
            <person name="Nascimento L."/>
            <person name="De la Bastide M."/>
            <person name="Spiegel L."/>
            <person name="Ware D."/>
            <person name="O'Shaughnessy A."/>
            <person name="Dike S."/>
            <person name="Dedhia N."/>
            <person name="Preston R."/>
            <person name="Huang E."/>
            <person name="Ferraro K."/>
            <person name="Kuit K."/>
            <person name="Miller B."/>
            <person name="Zutavern T."/>
            <person name="Katzenberger F."/>
            <person name="Muller S."/>
            <person name="Balija V."/>
            <person name="Martienssen R.A."/>
            <person name="Stein L."/>
            <person name="Minx P."/>
            <person name="Johnson D."/>
            <person name="Cordum H."/>
            <person name="Mardis E."/>
            <person name="Cheng Z."/>
            <person name="Jiang J."/>
            <person name="Wilson R."/>
            <person name="McCombie W.R."/>
            <person name="Wing R.A."/>
            <person name="Yuan Q."/>
            <person name="Ouyang S."/>
            <person name="Liu J."/>
            <person name="Jones K.M."/>
            <person name="Gansberger K."/>
            <person name="Moffat K."/>
            <person name="Hill J."/>
            <person name="Tsitrin T."/>
            <person name="Overton L."/>
            <person name="Bera J."/>
            <person name="Kim M."/>
            <person name="Jin S."/>
            <person name="Tallon L."/>
            <person name="Ciecko A."/>
            <person name="Pai G."/>
            <person name="Van Aken S."/>
            <person name="Utterback T."/>
            <person name="Reidmuller S."/>
            <person name="Bormann J."/>
            <person name="Feldblyum T."/>
            <person name="Hsiao J."/>
            <person name="Zismann V."/>
            <person name="Blunt S."/>
            <person name="de Vazeille A.R."/>
            <person name="Shaffer T."/>
            <person name="Koo H."/>
            <person name="Suh B."/>
            <person name="Yang Q."/>
            <person name="Haas B."/>
            <person name="Peterson J."/>
            <person name="Pertea M."/>
            <person name="Volfovsky N."/>
            <person name="Wortman J."/>
            <person name="White O."/>
            <person name="Salzberg S.L."/>
            <person name="Fraser C.M."/>
            <person name="Buell C.R."/>
            <person name="Messing J."/>
            <person name="Song R."/>
            <person name="Fuks G."/>
            <person name="Llaca V."/>
            <person name="Kovchak S."/>
            <person name="Young S."/>
            <person name="Bowers J.E."/>
            <person name="Paterson A.H."/>
            <person name="Johns M.A."/>
            <person name="Mao L."/>
            <person name="Pan H."/>
            <person name="Dean R.A."/>
        </authorList>
    </citation>
    <scope>NUCLEOTIDE SEQUENCE [LARGE SCALE GENOMIC DNA]</scope>
    <source>
        <strain>cv. Nipponbare</strain>
    </source>
</reference>
<reference key="2">
    <citation type="journal article" date="2005" name="Nature">
        <title>The map-based sequence of the rice genome.</title>
        <authorList>
            <consortium name="International rice genome sequencing project (IRGSP)"/>
        </authorList>
    </citation>
    <scope>NUCLEOTIDE SEQUENCE [LARGE SCALE GENOMIC DNA]</scope>
    <source>
        <strain>cv. Nipponbare</strain>
    </source>
</reference>
<reference key="3">
    <citation type="journal article" date="2008" name="Nucleic Acids Res.">
        <title>The rice annotation project database (RAP-DB): 2008 update.</title>
        <authorList>
            <consortium name="The rice annotation project (RAP)"/>
        </authorList>
    </citation>
    <scope>GENOME REANNOTATION</scope>
    <source>
        <strain>cv. Nipponbare</strain>
    </source>
</reference>
<reference key="4">
    <citation type="journal article" date="2013" name="Rice">
        <title>Improvement of the Oryza sativa Nipponbare reference genome using next generation sequence and optical map data.</title>
        <authorList>
            <person name="Kawahara Y."/>
            <person name="de la Bastide M."/>
            <person name="Hamilton J.P."/>
            <person name="Kanamori H."/>
            <person name="McCombie W.R."/>
            <person name="Ouyang S."/>
            <person name="Schwartz D.C."/>
            <person name="Tanaka T."/>
            <person name="Wu J."/>
            <person name="Zhou S."/>
            <person name="Childs K.L."/>
            <person name="Davidson R.M."/>
            <person name="Lin H."/>
            <person name="Quesada-Ocampo L."/>
            <person name="Vaillancourt B."/>
            <person name="Sakai H."/>
            <person name="Lee S.S."/>
            <person name="Kim J."/>
            <person name="Numa H."/>
            <person name="Itoh T."/>
            <person name="Buell C.R."/>
            <person name="Matsumoto T."/>
        </authorList>
    </citation>
    <scope>GENOME REANNOTATION</scope>
    <source>
        <strain>cv. Nipponbare</strain>
    </source>
</reference>
<reference key="5">
    <citation type="journal article" date="2005" name="PLoS Biol.">
        <title>The genomes of Oryza sativa: a history of duplications.</title>
        <authorList>
            <person name="Yu J."/>
            <person name="Wang J."/>
            <person name="Lin W."/>
            <person name="Li S."/>
            <person name="Li H."/>
            <person name="Zhou J."/>
            <person name="Ni P."/>
            <person name="Dong W."/>
            <person name="Hu S."/>
            <person name="Zeng C."/>
            <person name="Zhang J."/>
            <person name="Zhang Y."/>
            <person name="Li R."/>
            <person name="Xu Z."/>
            <person name="Li S."/>
            <person name="Li X."/>
            <person name="Zheng H."/>
            <person name="Cong L."/>
            <person name="Lin L."/>
            <person name="Yin J."/>
            <person name="Geng J."/>
            <person name="Li G."/>
            <person name="Shi J."/>
            <person name="Liu J."/>
            <person name="Lv H."/>
            <person name="Li J."/>
            <person name="Wang J."/>
            <person name="Deng Y."/>
            <person name="Ran L."/>
            <person name="Shi X."/>
            <person name="Wang X."/>
            <person name="Wu Q."/>
            <person name="Li C."/>
            <person name="Ren X."/>
            <person name="Wang J."/>
            <person name="Wang X."/>
            <person name="Li D."/>
            <person name="Liu D."/>
            <person name="Zhang X."/>
            <person name="Ji Z."/>
            <person name="Zhao W."/>
            <person name="Sun Y."/>
            <person name="Zhang Z."/>
            <person name="Bao J."/>
            <person name="Han Y."/>
            <person name="Dong L."/>
            <person name="Ji J."/>
            <person name="Chen P."/>
            <person name="Wu S."/>
            <person name="Liu J."/>
            <person name="Xiao Y."/>
            <person name="Bu D."/>
            <person name="Tan J."/>
            <person name="Yang L."/>
            <person name="Ye C."/>
            <person name="Zhang J."/>
            <person name="Xu J."/>
            <person name="Zhou Y."/>
            <person name="Yu Y."/>
            <person name="Zhang B."/>
            <person name="Zhuang S."/>
            <person name="Wei H."/>
            <person name="Liu B."/>
            <person name="Lei M."/>
            <person name="Yu H."/>
            <person name="Li Y."/>
            <person name="Xu H."/>
            <person name="Wei S."/>
            <person name="He X."/>
            <person name="Fang L."/>
            <person name="Zhang Z."/>
            <person name="Zhang Y."/>
            <person name="Huang X."/>
            <person name="Su Z."/>
            <person name="Tong W."/>
            <person name="Li J."/>
            <person name="Tong Z."/>
            <person name="Li S."/>
            <person name="Ye J."/>
            <person name="Wang L."/>
            <person name="Fang L."/>
            <person name="Lei T."/>
            <person name="Chen C.-S."/>
            <person name="Chen H.-C."/>
            <person name="Xu Z."/>
            <person name="Li H."/>
            <person name="Huang H."/>
            <person name="Zhang F."/>
            <person name="Xu H."/>
            <person name="Li N."/>
            <person name="Zhao C."/>
            <person name="Li S."/>
            <person name="Dong L."/>
            <person name="Huang Y."/>
            <person name="Li L."/>
            <person name="Xi Y."/>
            <person name="Qi Q."/>
            <person name="Li W."/>
            <person name="Zhang B."/>
            <person name="Hu W."/>
            <person name="Zhang Y."/>
            <person name="Tian X."/>
            <person name="Jiao Y."/>
            <person name="Liang X."/>
            <person name="Jin J."/>
            <person name="Gao L."/>
            <person name="Zheng W."/>
            <person name="Hao B."/>
            <person name="Liu S.-M."/>
            <person name="Wang W."/>
            <person name="Yuan L."/>
            <person name="Cao M."/>
            <person name="McDermott J."/>
            <person name="Samudrala R."/>
            <person name="Wang J."/>
            <person name="Wong G.K.-S."/>
            <person name="Yang H."/>
        </authorList>
    </citation>
    <scope>NUCLEOTIDE SEQUENCE [LARGE SCALE GENOMIC DNA]</scope>
    <source>
        <strain>cv. Nipponbare</strain>
    </source>
</reference>
<reference key="6">
    <citation type="journal article" date="2003" name="Science">
        <title>Collection, mapping, and annotation of over 28,000 cDNA clones from japonica rice.</title>
        <authorList>
            <consortium name="The rice full-length cDNA consortium"/>
        </authorList>
    </citation>
    <scope>NUCLEOTIDE SEQUENCE [LARGE SCALE MRNA]</scope>
    <source>
        <strain>cv. Nipponbare</strain>
    </source>
</reference>
<reference key="7">
    <citation type="journal article" date="2008" name="Biochemistry">
        <title>Thermodynamic basis for the stabilities of three CutA1s from Pyrococcus horikoshii, Thermus thermophilus, and Oryza sativa, with unusually high denaturation temperatures.</title>
        <authorList>
            <person name="Sawano M."/>
            <person name="Yamamoto H."/>
            <person name="Ogasahara K."/>
            <person name="Kidokoro S."/>
            <person name="Katoh S."/>
            <person name="Ohnuma T."/>
            <person name="Katoh E."/>
            <person name="Yokoyama S."/>
            <person name="Yutani K."/>
        </authorList>
    </citation>
    <scope>X-RAY CRYSTALLOGRAPHY (3.02 ANGSTROMS) OF 65-177</scope>
    <scope>TRIMERIZATION</scope>
</reference>